<gene>
    <name type="primary">rsbV</name>
    <name type="ordered locus">SAR2154</name>
</gene>
<protein>
    <recommendedName>
        <fullName>Anti-sigma-B factor antagonist</fullName>
    </recommendedName>
    <alternativeName>
        <fullName>Anti-anti-sigma-B factor</fullName>
    </alternativeName>
</protein>
<reference key="1">
    <citation type="journal article" date="2004" name="Proc. Natl. Acad. Sci. U.S.A.">
        <title>Complete genomes of two clinical Staphylococcus aureus strains: evidence for the rapid evolution of virulence and drug resistance.</title>
        <authorList>
            <person name="Holden M.T.G."/>
            <person name="Feil E.J."/>
            <person name="Lindsay J.A."/>
            <person name="Peacock S.J."/>
            <person name="Day N.P.J."/>
            <person name="Enright M.C."/>
            <person name="Foster T.J."/>
            <person name="Moore C.E."/>
            <person name="Hurst L."/>
            <person name="Atkin R."/>
            <person name="Barron A."/>
            <person name="Bason N."/>
            <person name="Bentley S.D."/>
            <person name="Chillingworth C."/>
            <person name="Chillingworth T."/>
            <person name="Churcher C."/>
            <person name="Clark L."/>
            <person name="Corton C."/>
            <person name="Cronin A."/>
            <person name="Doggett J."/>
            <person name="Dowd L."/>
            <person name="Feltwell T."/>
            <person name="Hance Z."/>
            <person name="Harris B."/>
            <person name="Hauser H."/>
            <person name="Holroyd S."/>
            <person name="Jagels K."/>
            <person name="James K.D."/>
            <person name="Lennard N."/>
            <person name="Line A."/>
            <person name="Mayes R."/>
            <person name="Moule S."/>
            <person name="Mungall K."/>
            <person name="Ormond D."/>
            <person name="Quail M.A."/>
            <person name="Rabbinowitsch E."/>
            <person name="Rutherford K.M."/>
            <person name="Sanders M."/>
            <person name="Sharp S."/>
            <person name="Simmonds M."/>
            <person name="Stevens K."/>
            <person name="Whitehead S."/>
            <person name="Barrell B.G."/>
            <person name="Spratt B.G."/>
            <person name="Parkhill J."/>
        </authorList>
    </citation>
    <scope>NUCLEOTIDE SEQUENCE [LARGE SCALE GENOMIC DNA]</scope>
    <source>
        <strain>MRSA252</strain>
    </source>
</reference>
<dbReference type="EMBL" id="BX571856">
    <property type="protein sequence ID" value="CAG41135.1"/>
    <property type="molecule type" value="Genomic_DNA"/>
</dbReference>
<dbReference type="RefSeq" id="WP_001052491.1">
    <property type="nucleotide sequence ID" value="NC_002952.2"/>
</dbReference>
<dbReference type="SMR" id="Q6GF07"/>
<dbReference type="KEGG" id="sar:SAR2154"/>
<dbReference type="HOGENOM" id="CLU_115403_9_3_9"/>
<dbReference type="Proteomes" id="UP000000596">
    <property type="component" value="Chromosome"/>
</dbReference>
<dbReference type="GO" id="GO:0043856">
    <property type="term" value="F:anti-sigma factor antagonist activity"/>
    <property type="evidence" value="ECO:0007669"/>
    <property type="project" value="InterPro"/>
</dbReference>
<dbReference type="CDD" id="cd07043">
    <property type="entry name" value="STAS_anti-anti-sigma_factors"/>
    <property type="match status" value="1"/>
</dbReference>
<dbReference type="FunFam" id="3.30.750.24:FF:000001">
    <property type="entry name" value="Anti-sigma factor antagonist"/>
    <property type="match status" value="1"/>
</dbReference>
<dbReference type="Gene3D" id="3.30.750.24">
    <property type="entry name" value="STAS domain"/>
    <property type="match status" value="1"/>
</dbReference>
<dbReference type="InterPro" id="IPR003658">
    <property type="entry name" value="Anti-sigma_ant"/>
</dbReference>
<dbReference type="InterPro" id="IPR002645">
    <property type="entry name" value="STAS_dom"/>
</dbReference>
<dbReference type="InterPro" id="IPR036513">
    <property type="entry name" value="STAS_dom_sf"/>
</dbReference>
<dbReference type="NCBIfam" id="TIGR00377">
    <property type="entry name" value="ant_ant_sig"/>
    <property type="match status" value="1"/>
</dbReference>
<dbReference type="PANTHER" id="PTHR33495">
    <property type="entry name" value="ANTI-SIGMA FACTOR ANTAGONIST TM_1081-RELATED-RELATED"/>
    <property type="match status" value="1"/>
</dbReference>
<dbReference type="PANTHER" id="PTHR33495:SF9">
    <property type="entry name" value="ANTI-SIGMA-B FACTOR ANTAGONIST"/>
    <property type="match status" value="1"/>
</dbReference>
<dbReference type="Pfam" id="PF01740">
    <property type="entry name" value="STAS"/>
    <property type="match status" value="1"/>
</dbReference>
<dbReference type="SUPFAM" id="SSF52091">
    <property type="entry name" value="SpoIIaa-like"/>
    <property type="match status" value="1"/>
</dbReference>
<dbReference type="PROSITE" id="PS50801">
    <property type="entry name" value="STAS"/>
    <property type="match status" value="1"/>
</dbReference>
<sequence>MNLNIETTTQDKFYEVKVGGELDVYTVPELEEVLTPMRQDGTRDIYVNLENVSYMDSTGLGLFVGTLKALNQNDKELYILGVSDRIGRLFEITGLKDLMHVNEGTEVE</sequence>
<keyword id="KW-0597">Phosphoprotein</keyword>
<accession>Q6GF07</accession>
<feature type="chain" id="PRO_0000194191" description="Anti-sigma-B factor antagonist">
    <location>
        <begin position="1"/>
        <end position="108"/>
    </location>
</feature>
<feature type="domain" description="STAS" evidence="2">
    <location>
        <begin position="3"/>
        <end position="108"/>
    </location>
</feature>
<feature type="modified residue" description="Phosphoserine" evidence="1">
    <location>
        <position position="57"/>
    </location>
</feature>
<name>RSBV_STAAR</name>
<organism>
    <name type="scientific">Staphylococcus aureus (strain MRSA252)</name>
    <dbReference type="NCBI Taxonomy" id="282458"/>
    <lineage>
        <taxon>Bacteria</taxon>
        <taxon>Bacillati</taxon>
        <taxon>Bacillota</taxon>
        <taxon>Bacilli</taxon>
        <taxon>Bacillales</taxon>
        <taxon>Staphylococcaceae</taxon>
        <taxon>Staphylococcus</taxon>
    </lineage>
</organism>
<evidence type="ECO:0000250" key="1"/>
<evidence type="ECO:0000255" key="2">
    <source>
        <dbReference type="PROSITE-ProRule" id="PRU00198"/>
    </source>
</evidence>
<evidence type="ECO:0000305" key="3"/>
<comment type="function">
    <text evidence="1">Positive regulator of sigma-B activity. Non-phosphorylated RsbV binds to RsbW, preventing its association with sigma-B. When phosphorylated, releases RsbW, which is then free to complex with and inactivate sigma-B (By similarity).</text>
</comment>
<comment type="PTM">
    <text evidence="1">Phosphorylated by RsbW on a serine residue.</text>
</comment>
<comment type="similarity">
    <text evidence="3">Belongs to the anti-sigma-factor antagonist family.</text>
</comment>
<proteinExistence type="inferred from homology"/>